<evidence type="ECO:0000250" key="1">
    <source>
        <dbReference type="UniProtKB" id="P9WQB3"/>
    </source>
</evidence>
<evidence type="ECO:0000255" key="2">
    <source>
        <dbReference type="HAMAP-Rule" id="MF_01025"/>
    </source>
</evidence>
<evidence type="ECO:0000269" key="3">
    <source>
    </source>
</evidence>
<evidence type="ECO:0000269" key="4">
    <source>
    </source>
</evidence>
<evidence type="ECO:0000305" key="5">
    <source>
    </source>
</evidence>
<evidence type="ECO:0007744" key="6">
    <source>
        <dbReference type="PDB" id="3RMJ"/>
    </source>
</evidence>
<evidence type="ECO:0007829" key="7">
    <source>
        <dbReference type="PDB" id="3RMJ"/>
    </source>
</evidence>
<organism>
    <name type="scientific">Neisseria meningitidis serogroup B (strain ATCC BAA-335 / MC58)</name>
    <dbReference type="NCBI Taxonomy" id="122586"/>
    <lineage>
        <taxon>Bacteria</taxon>
        <taxon>Pseudomonadati</taxon>
        <taxon>Pseudomonadota</taxon>
        <taxon>Betaproteobacteria</taxon>
        <taxon>Neisseriales</taxon>
        <taxon>Neisseriaceae</taxon>
        <taxon>Neisseria</taxon>
    </lineage>
</organism>
<name>LEU1_NEIMB</name>
<feature type="chain" id="PRO_0000140364" description="2-isopropylmalate synthase">
    <location>
        <begin position="1"/>
        <end position="517"/>
    </location>
</feature>
<feature type="domain" description="Pyruvate carboxyltransferase" evidence="2">
    <location>
        <begin position="7"/>
        <end position="269"/>
    </location>
</feature>
<feature type="region of interest" description="Required for the condensation reaction. Not required to bind substrate" evidence="3 4">
    <location>
        <begin position="366"/>
        <end position="517"/>
    </location>
</feature>
<feature type="region of interest" description="Regulatory domain" evidence="1 2">
    <location>
        <begin position="395"/>
        <end position="517"/>
    </location>
</feature>
<feature type="binding site" evidence="2 4 6">
    <location>
        <position position="16"/>
    </location>
    <ligand>
        <name>Mn(2+)</name>
        <dbReference type="ChEBI" id="CHEBI:29035"/>
    </ligand>
</feature>
<feature type="binding site" evidence="2 4 6">
    <location>
        <position position="204"/>
    </location>
    <ligand>
        <name>Mn(2+)</name>
        <dbReference type="ChEBI" id="CHEBI:29035"/>
    </ligand>
</feature>
<feature type="binding site" evidence="2 4 6">
    <location>
        <position position="206"/>
    </location>
    <ligand>
        <name>Mn(2+)</name>
        <dbReference type="ChEBI" id="CHEBI:29035"/>
    </ligand>
</feature>
<feature type="binding site" evidence="2 4 6">
    <location>
        <position position="240"/>
    </location>
    <ligand>
        <name>Mn(2+)</name>
        <dbReference type="ChEBI" id="CHEBI:29035"/>
    </ligand>
</feature>
<feature type="strand" evidence="7">
    <location>
        <begin position="8"/>
        <end position="11"/>
    </location>
</feature>
<feature type="helix" evidence="7">
    <location>
        <begin position="13"/>
        <end position="17"/>
    </location>
</feature>
<feature type="helix" evidence="7">
    <location>
        <begin position="27"/>
        <end position="40"/>
    </location>
</feature>
<feature type="strand" evidence="7">
    <location>
        <begin position="43"/>
        <end position="49"/>
    </location>
</feature>
<feature type="helix" evidence="7">
    <location>
        <begin position="50"/>
        <end position="52"/>
    </location>
</feature>
<feature type="helix" evidence="7">
    <location>
        <begin position="54"/>
        <end position="64"/>
    </location>
</feature>
<feature type="strand" evidence="7">
    <location>
        <begin position="68"/>
        <end position="79"/>
    </location>
</feature>
<feature type="helix" evidence="7">
    <location>
        <begin position="80"/>
        <end position="90"/>
    </location>
</feature>
<feature type="strand" evidence="7">
    <location>
        <begin position="93"/>
        <end position="103"/>
    </location>
</feature>
<feature type="helix" evidence="7">
    <location>
        <begin position="106"/>
        <end position="111"/>
    </location>
</feature>
<feature type="helix" evidence="7">
    <location>
        <begin position="117"/>
        <end position="131"/>
    </location>
</feature>
<feature type="turn" evidence="7">
    <location>
        <begin position="132"/>
        <end position="134"/>
    </location>
</feature>
<feature type="strand" evidence="7">
    <location>
        <begin position="138"/>
        <end position="143"/>
    </location>
</feature>
<feature type="helix" evidence="7">
    <location>
        <begin position="145"/>
        <end position="147"/>
    </location>
</feature>
<feature type="helix" evidence="7">
    <location>
        <begin position="150"/>
        <end position="163"/>
    </location>
</feature>
<feature type="strand" evidence="7">
    <location>
        <begin position="167"/>
        <end position="171"/>
    </location>
</feature>
<feature type="strand" evidence="7">
    <location>
        <begin position="173"/>
        <end position="175"/>
    </location>
</feature>
<feature type="helix" evidence="7">
    <location>
        <begin position="179"/>
        <end position="192"/>
    </location>
</feature>
<feature type="helix" evidence="7">
    <location>
        <begin position="196"/>
        <end position="198"/>
    </location>
</feature>
<feature type="strand" evidence="7">
    <location>
        <begin position="199"/>
        <end position="204"/>
    </location>
</feature>
<feature type="helix" evidence="7">
    <location>
        <begin position="212"/>
        <end position="221"/>
    </location>
</feature>
<feature type="strand" evidence="7">
    <location>
        <begin position="226"/>
        <end position="230"/>
    </location>
</feature>
<feature type="helix" evidence="7">
    <location>
        <begin position="231"/>
        <end position="233"/>
    </location>
</feature>
<feature type="helix" evidence="7">
    <location>
        <begin position="243"/>
        <end position="252"/>
    </location>
</feature>
<feature type="helix" evidence="7">
    <location>
        <begin position="254"/>
        <end position="257"/>
    </location>
</feature>
<feature type="helix" evidence="7">
    <location>
        <begin position="265"/>
        <end position="267"/>
    </location>
</feature>
<feature type="helix" evidence="7">
    <location>
        <begin position="268"/>
        <end position="279"/>
    </location>
</feature>
<feature type="turn" evidence="7">
    <location>
        <begin position="288"/>
        <end position="290"/>
    </location>
</feature>
<feature type="turn" evidence="7">
    <location>
        <begin position="292"/>
        <end position="295"/>
    </location>
</feature>
<feature type="helix" evidence="7">
    <location>
        <begin position="319"/>
        <end position="321"/>
    </location>
</feature>
<comment type="function">
    <text evidence="2 3 4">Catalyzes the condensation of the acetyl group of acetyl-CoA with 3-methyl-2-oxobutanoate (2-ketoisovalerate) to form 3-carboxy-3-hydroxy-4-methylpentanoate (2-isopropylmalate) (PubMed:20117081). Complements an E.coli deletion (PubMed:22352945).</text>
</comment>
<comment type="catalytic activity">
    <reaction evidence="2 3">
        <text>3-methyl-2-oxobutanoate + acetyl-CoA + H2O = (2S)-2-isopropylmalate + CoA + H(+)</text>
        <dbReference type="Rhea" id="RHEA:21524"/>
        <dbReference type="ChEBI" id="CHEBI:1178"/>
        <dbReference type="ChEBI" id="CHEBI:11851"/>
        <dbReference type="ChEBI" id="CHEBI:15377"/>
        <dbReference type="ChEBI" id="CHEBI:15378"/>
        <dbReference type="ChEBI" id="CHEBI:57287"/>
        <dbReference type="ChEBI" id="CHEBI:57288"/>
        <dbReference type="EC" id="2.3.3.13"/>
    </reaction>
    <physiologicalReaction direction="left-to-right" evidence="3">
        <dbReference type="Rhea" id="RHEA:21525"/>
    </physiologicalReaction>
</comment>
<comment type="cofactor">
    <cofactor evidence="2 4">
        <name>Mn(2+)</name>
        <dbReference type="ChEBI" id="CHEBI:29035"/>
    </cofactor>
    <text evidence="3">In vitro Co(2+) and Mn(2+) strongly activate condensation, Mg(2+), Cd(2+), Ni(2+) and Zn(2+) weakly activate.</text>
</comment>
<comment type="activity regulation">
    <text evidence="3">Inhibited by 3-bromo substituents and Leu, the pathway end product.</text>
</comment>
<comment type="biophysicochemical properties">
    <kinetics>
        <KM evidence="3">30 uM for 3-methyl-2-oxobutanoate</KM>
        <KM evidence="3">35 uM for acetyl-CoA</KM>
        <KM evidence="3">250 uM for acetyl-CoA in the absence of 3-methyl-2-oxobutanoate (uncoupled acetyl-CoA hydrolysis)</KM>
        <KM evidence="3">620 uM for 2-oxobutanoate</KM>
        <KM evidence="3">280 uM for 3-methyl-2-oxopentanoate</KM>
        <text evidence="3">kcat is 13 sec(-1) for 3-methyl-2-oxobutanoate, 3.4 sec(-1) for 2-oxobutanoate, 0.027 sec(-1) for 3-methyl-2-oxopentanoate.</text>
    </kinetics>
    <phDependence>
        <text evidence="3">Optimum pH is 8.5.</text>
    </phDependence>
    <temperatureDependence>
        <text evidence="3">Optimum temperature is 40 degrees Celsius. Thermostable up to 44 degrees Celsius, in the presence of Leu thermostable to 59 degrees Celsius, in the presence of Leu and 3-methyl-2-oxobutanoate or Leu and acetyl-CoA thermostable until 61-62 degrees Celsius.</text>
    </temperatureDependence>
</comment>
<comment type="pathway">
    <text evidence="2 5">Amino-acid biosynthesis; L-leucine biosynthesis; L-leucine from 3-methyl-2-oxobutanoate: step 1/4.</text>
</comment>
<comment type="subunit">
    <text evidence="2 3 4">Homodimer (By similarity) (PubMed:20117081, PubMed:22352945). Remains a homodimer in the presence of L-leucine (PubMed:22352945).</text>
</comment>
<comment type="subcellular location">
    <subcellularLocation>
        <location evidence="2 5">Cytoplasm</location>
    </subcellularLocation>
</comment>
<comment type="domain">
    <text evidence="1 3 4">The N-terminal catalytic domain forms an (alpha/beta)8 TIM barrel and binds Mn(2+) (PubMed:22352945). The C-terminus (residues 366 to 517), is important for increased thermostability (PubMed:20117081) and for condensation of the 2 substrates (PubMed:20117081, PubMed:22352945). The regulatory domain binds L-Leu (the pathway end product) in the dimer interface (By similarity).</text>
</comment>
<comment type="similarity">
    <text evidence="2">Belongs to the alpha-IPM synthase/homocitrate synthase family. LeuA type 1 subfamily.</text>
</comment>
<keyword id="KW-0002">3D-structure</keyword>
<keyword id="KW-0028">Amino-acid biosynthesis</keyword>
<keyword id="KW-0100">Branched-chain amino acid biosynthesis</keyword>
<keyword id="KW-0963">Cytoplasm</keyword>
<keyword id="KW-0432">Leucine biosynthesis</keyword>
<keyword id="KW-0464">Manganese</keyword>
<keyword id="KW-0479">Metal-binding</keyword>
<keyword id="KW-1185">Reference proteome</keyword>
<keyword id="KW-0808">Transferase</keyword>
<accession>Q9JZG1</accession>
<gene>
    <name evidence="2" type="primary">leuA</name>
    <name type="ordered locus">NMB1070</name>
</gene>
<dbReference type="EC" id="2.3.3.13" evidence="2 3"/>
<dbReference type="EMBL" id="AE002098">
    <property type="protein sequence ID" value="AAF41465.1"/>
    <property type="molecule type" value="Genomic_DNA"/>
</dbReference>
<dbReference type="PIR" id="G81125">
    <property type="entry name" value="G81125"/>
</dbReference>
<dbReference type="RefSeq" id="NP_274103.1">
    <property type="nucleotide sequence ID" value="NC_003112.2"/>
</dbReference>
<dbReference type="PDB" id="3RMJ">
    <property type="method" value="X-ray"/>
    <property type="resolution" value="1.95 A"/>
    <property type="chains" value="A/B=1-364"/>
</dbReference>
<dbReference type="PDBsum" id="3RMJ"/>
<dbReference type="SMR" id="Q9JZG1"/>
<dbReference type="FunCoup" id="Q9JZG1">
    <property type="interactions" value="458"/>
</dbReference>
<dbReference type="STRING" id="122586.NMB1070"/>
<dbReference type="PaxDb" id="122586-NMB1070"/>
<dbReference type="KEGG" id="nme:NMB1070"/>
<dbReference type="PATRIC" id="fig|122586.8.peg.1361"/>
<dbReference type="HOGENOM" id="CLU_022158_0_1_4"/>
<dbReference type="InParanoid" id="Q9JZG1"/>
<dbReference type="OrthoDB" id="9803573at2"/>
<dbReference type="BRENDA" id="2.3.3.13">
    <property type="organism ID" value="3593"/>
</dbReference>
<dbReference type="UniPathway" id="UPA00048">
    <property type="reaction ID" value="UER00070"/>
</dbReference>
<dbReference type="EvolutionaryTrace" id="Q9JZG1"/>
<dbReference type="Proteomes" id="UP000000425">
    <property type="component" value="Chromosome"/>
</dbReference>
<dbReference type="GO" id="GO:0005829">
    <property type="term" value="C:cytosol"/>
    <property type="evidence" value="ECO:0000318"/>
    <property type="project" value="GO_Central"/>
</dbReference>
<dbReference type="GO" id="GO:0003852">
    <property type="term" value="F:2-isopropylmalate synthase activity"/>
    <property type="evidence" value="ECO:0000318"/>
    <property type="project" value="GO_Central"/>
</dbReference>
<dbReference type="GO" id="GO:0003985">
    <property type="term" value="F:acetyl-CoA C-acetyltransferase activity"/>
    <property type="evidence" value="ECO:0007669"/>
    <property type="project" value="UniProtKB-UniRule"/>
</dbReference>
<dbReference type="GO" id="GO:0030145">
    <property type="term" value="F:manganese ion binding"/>
    <property type="evidence" value="ECO:0007669"/>
    <property type="project" value="UniProtKB-UniRule"/>
</dbReference>
<dbReference type="GO" id="GO:0009098">
    <property type="term" value="P:L-leucine biosynthetic process"/>
    <property type="evidence" value="ECO:0000318"/>
    <property type="project" value="GO_Central"/>
</dbReference>
<dbReference type="CDD" id="cd07940">
    <property type="entry name" value="DRE_TIM_IPMS"/>
    <property type="match status" value="1"/>
</dbReference>
<dbReference type="FunFam" id="1.10.238.260:FF:000001">
    <property type="entry name" value="2-isopropylmalate synthase"/>
    <property type="match status" value="1"/>
</dbReference>
<dbReference type="FunFam" id="3.20.20.70:FF:000010">
    <property type="entry name" value="2-isopropylmalate synthase"/>
    <property type="match status" value="1"/>
</dbReference>
<dbReference type="FunFam" id="3.30.160.270:FF:000003">
    <property type="entry name" value="2-isopropylmalate synthase"/>
    <property type="match status" value="1"/>
</dbReference>
<dbReference type="Gene3D" id="1.10.238.260">
    <property type="match status" value="1"/>
</dbReference>
<dbReference type="Gene3D" id="3.30.160.270">
    <property type="match status" value="1"/>
</dbReference>
<dbReference type="Gene3D" id="3.20.20.70">
    <property type="entry name" value="Aldolase class I"/>
    <property type="match status" value="1"/>
</dbReference>
<dbReference type="HAMAP" id="MF_01025">
    <property type="entry name" value="LeuA_type1"/>
    <property type="match status" value="1"/>
</dbReference>
<dbReference type="InterPro" id="IPR050073">
    <property type="entry name" value="2-IPM_HCS-like"/>
</dbReference>
<dbReference type="InterPro" id="IPR013709">
    <property type="entry name" value="2-isopropylmalate_synth_dimer"/>
</dbReference>
<dbReference type="InterPro" id="IPR002034">
    <property type="entry name" value="AIPM/Hcit_synth_CS"/>
</dbReference>
<dbReference type="InterPro" id="IPR013785">
    <property type="entry name" value="Aldolase_TIM"/>
</dbReference>
<dbReference type="InterPro" id="IPR054691">
    <property type="entry name" value="LeuA/HCS_post-cat"/>
</dbReference>
<dbReference type="InterPro" id="IPR036230">
    <property type="entry name" value="LeuA_allosteric_dom_sf"/>
</dbReference>
<dbReference type="InterPro" id="IPR005671">
    <property type="entry name" value="LeuA_bact_synth"/>
</dbReference>
<dbReference type="InterPro" id="IPR000891">
    <property type="entry name" value="PYR_CT"/>
</dbReference>
<dbReference type="NCBIfam" id="TIGR00973">
    <property type="entry name" value="leuA_bact"/>
    <property type="match status" value="1"/>
</dbReference>
<dbReference type="NCBIfam" id="NF002086">
    <property type="entry name" value="PRK00915.1-3"/>
    <property type="match status" value="1"/>
</dbReference>
<dbReference type="NCBIfam" id="NF002087">
    <property type="entry name" value="PRK00915.1-4"/>
    <property type="match status" value="1"/>
</dbReference>
<dbReference type="PANTHER" id="PTHR10277:SF9">
    <property type="entry name" value="2-ISOPROPYLMALATE SYNTHASE 1, CHLOROPLASTIC-RELATED"/>
    <property type="match status" value="1"/>
</dbReference>
<dbReference type="PANTHER" id="PTHR10277">
    <property type="entry name" value="HOMOCITRATE SYNTHASE-RELATED"/>
    <property type="match status" value="1"/>
</dbReference>
<dbReference type="Pfam" id="PF22617">
    <property type="entry name" value="HCS_D2"/>
    <property type="match status" value="1"/>
</dbReference>
<dbReference type="Pfam" id="PF00682">
    <property type="entry name" value="HMGL-like"/>
    <property type="match status" value="1"/>
</dbReference>
<dbReference type="Pfam" id="PF08502">
    <property type="entry name" value="LeuA_dimer"/>
    <property type="match status" value="1"/>
</dbReference>
<dbReference type="SMART" id="SM00917">
    <property type="entry name" value="LeuA_dimer"/>
    <property type="match status" value="1"/>
</dbReference>
<dbReference type="SUPFAM" id="SSF110921">
    <property type="entry name" value="2-isopropylmalate synthase LeuA, allosteric (dimerisation) domain"/>
    <property type="match status" value="1"/>
</dbReference>
<dbReference type="SUPFAM" id="SSF51569">
    <property type="entry name" value="Aldolase"/>
    <property type="match status" value="1"/>
</dbReference>
<dbReference type="PROSITE" id="PS00815">
    <property type="entry name" value="AIPM_HOMOCIT_SYNTH_1"/>
    <property type="match status" value="1"/>
</dbReference>
<dbReference type="PROSITE" id="PS00816">
    <property type="entry name" value="AIPM_HOMOCIT_SYNTH_2"/>
    <property type="match status" value="1"/>
</dbReference>
<dbReference type="PROSITE" id="PS50991">
    <property type="entry name" value="PYR_CT"/>
    <property type="match status" value="1"/>
</dbReference>
<sequence length="517" mass="55397">MTQTNRVIIFDTTLRDGEQSPGAAMTKEEKIRVARQLEKLGVDIIEAGFAAASPGDFEAVNAIAKTITKSTVCSLSRAIERDIRQAGEAVAPAPKKRIHTFIATSPIHMEYKLKMKPKQVIEAAVKAVKIAREYTDDVEFSCEDALRSEIDFLAEICGAVIEAGATTINIPDTVGYSIPYKTEEFFRELIAKTPNGGKVVWSAHCHNDLGLAVANSLAALKGGARQVECTVNGLGERAGNASVEEIVMALKVRHDLFGLETGIDTTQIVPSSKLVSTITGYPVQPNKAIVGANAFSHESGIHQDGVLKHRETYEIMSAESVGWATNRLSLGKLSGRNAFKTKLADLGIELESEEALNAAFARFKELADKKREIFDEDLHALVSDEMGSMNAESYKFISQKISTETGEEPRADIVFSIKGEEKRASATGSGPVDAIFKAIESVAQSGAALQIYSVNAVTQGTESQGETSVRLARGNRVVNGQGADTDVLVATAKAYLSALSKLEFSAAKPKAQGSGTI</sequence>
<protein>
    <recommendedName>
        <fullName evidence="2">2-isopropylmalate synthase</fullName>
        <ecNumber evidence="2 3">2.3.3.13</ecNumber>
    </recommendedName>
    <alternativeName>
        <fullName evidence="2">Alpha-IPM synthase</fullName>
    </alternativeName>
    <alternativeName>
        <fullName evidence="2">Alpha-isopropylmalate synthase</fullName>
    </alternativeName>
</protein>
<proteinExistence type="evidence at protein level"/>
<reference key="1">
    <citation type="journal article" date="2000" name="Science">
        <title>Complete genome sequence of Neisseria meningitidis serogroup B strain MC58.</title>
        <authorList>
            <person name="Tettelin H."/>
            <person name="Saunders N.J."/>
            <person name="Heidelberg J.F."/>
            <person name="Jeffries A.C."/>
            <person name="Nelson K.E."/>
            <person name="Eisen J.A."/>
            <person name="Ketchum K.A."/>
            <person name="Hood D.W."/>
            <person name="Peden J.F."/>
            <person name="Dodson R.J."/>
            <person name="Nelson W.C."/>
            <person name="Gwinn M.L."/>
            <person name="DeBoy R.T."/>
            <person name="Peterson J.D."/>
            <person name="Hickey E.K."/>
            <person name="Haft D.H."/>
            <person name="Salzberg S.L."/>
            <person name="White O."/>
            <person name="Fleischmann R.D."/>
            <person name="Dougherty B.A."/>
            <person name="Mason T.M."/>
            <person name="Ciecko A."/>
            <person name="Parksey D.S."/>
            <person name="Blair E."/>
            <person name="Cittone H."/>
            <person name="Clark E.B."/>
            <person name="Cotton M.D."/>
            <person name="Utterback T.R."/>
            <person name="Khouri H.M."/>
            <person name="Qin H."/>
            <person name="Vamathevan J.J."/>
            <person name="Gill J."/>
            <person name="Scarlato V."/>
            <person name="Masignani V."/>
            <person name="Pizza M."/>
            <person name="Grandi G."/>
            <person name="Sun L."/>
            <person name="Smith H.O."/>
            <person name="Fraser C.M."/>
            <person name="Moxon E.R."/>
            <person name="Rappuoli R."/>
            <person name="Venter J.C."/>
        </authorList>
    </citation>
    <scope>NUCLEOTIDE SEQUENCE [LARGE SCALE GENOMIC DNA]</scope>
    <source>
        <strain>ATCC BAA-335 / MC58</strain>
    </source>
</reference>
<reference key="2">
    <citation type="journal article" date="2010" name="Biochem. Biophys. Res. Commun.">
        <title>The C-terminal regulatory domain is required for catalysis by Neisseria meningitidis alpha-isopropylmalate synthase.</title>
        <authorList>
            <person name="Huisman F.H."/>
            <person name="Hunter M.F."/>
            <person name="Devenish S.R."/>
            <person name="Gerrard J.A."/>
            <person name="Parker E.J."/>
        </authorList>
    </citation>
    <scope>FUNCTION</scope>
    <scope>CATALYTIC ACTIVITY</scope>
    <scope>COFACTOR</scope>
    <scope>ACTIVITY REGULATION</scope>
    <scope>BIOPHYSICOCHEMICAL PROPERTIES</scope>
    <scope>PATHWAY</scope>
    <scope>SUBUNIT</scope>
    <scope>DOMAIN</scope>
    <source>
        <strain>ATCC BAA-335 / MC58</strain>
    </source>
</reference>
<reference evidence="6" key="3">
    <citation type="journal article" date="2012" name="Biochemistry">
        <title>Removal of the C-terminal regulatory domain of alpha-isopropylmalate synthase disrupts functional substrate binding.</title>
        <authorList>
            <person name="Huisman F.H."/>
            <person name="Koon N."/>
            <person name="Bulloch E.M."/>
            <person name="Baker H.M."/>
            <person name="Baker E.N."/>
            <person name="Squire C.J."/>
            <person name="Parker E.J."/>
        </authorList>
    </citation>
    <scope>X-RAY CRYSTALLOGRAPHY (1.95 ANGSTROMS) OF 1-364 IN COMPLEX WITH MN(2+)</scope>
    <scope>COFACTOR</scope>
    <scope>SUBUNIT</scope>
    <scope>SUBCELLULAR LOCATION</scope>
</reference>